<name>SEPT3_BOVIN</name>
<comment type="function">
    <text evidence="1 6">Filament-forming cytoskeletal GTPase (By similarity). May play a role in cytokinesis (Potential).</text>
</comment>
<comment type="subunit">
    <text evidence="1">Septins polymerize into heterooligomeric protein complexes that form filaments, and can associate with cellular membranes, actin filaments and microtubules. GTPase activity is required for filament formation (By similarity).</text>
</comment>
<comment type="subcellular location">
    <subcellularLocation>
        <location>Cytoplasm</location>
    </subcellularLocation>
    <subcellularLocation>
        <location evidence="1">Cytoplasm</location>
        <location evidence="1">Cytoskeleton</location>
    </subcellularLocation>
    <subcellularLocation>
        <location evidence="1">Synapse</location>
    </subcellularLocation>
</comment>
<comment type="PTM">
    <text evidence="1">Phosphorylated by PKG on serine residues. Phosphorylated by PKG on Ser-91 (By similarity).</text>
</comment>
<comment type="similarity">
    <text evidence="4">Belongs to the TRAFAC class TrmE-Era-EngA-EngB-Septin-like GTPase superfamily. Septin GTPase family.</text>
</comment>
<reference key="1">
    <citation type="submission" date="2006-09" db="EMBL/GenBank/DDBJ databases">
        <authorList>
            <consortium name="NIH - Mammalian Gene Collection (MGC) project"/>
        </authorList>
    </citation>
    <scope>NUCLEOTIDE SEQUENCE [LARGE SCALE MRNA]</scope>
    <source>
        <strain>Hereford</strain>
        <tissue>Brain cortex</tissue>
    </source>
</reference>
<gene>
    <name evidence="2" type="primary">SEPTIN3</name>
    <name type="synonym">SEPT3</name>
</gene>
<dbReference type="EMBL" id="BC123664">
    <property type="protein sequence ID" value="AAI23665.1"/>
    <property type="molecule type" value="mRNA"/>
</dbReference>
<dbReference type="RefSeq" id="NP_001070417.1">
    <property type="nucleotide sequence ID" value="NM_001076949.2"/>
</dbReference>
<dbReference type="SMR" id="Q08DM7"/>
<dbReference type="FunCoup" id="Q08DM7">
    <property type="interactions" value="790"/>
</dbReference>
<dbReference type="STRING" id="9913.ENSBTAP00000017531"/>
<dbReference type="PaxDb" id="9913-ENSBTAP00000017531"/>
<dbReference type="GeneID" id="618235"/>
<dbReference type="KEGG" id="bta:618235"/>
<dbReference type="CTD" id="55964"/>
<dbReference type="VEuPathDB" id="HostDB:ENSBTAG00000013173"/>
<dbReference type="eggNOG" id="KOG1547">
    <property type="taxonomic scope" value="Eukaryota"/>
</dbReference>
<dbReference type="HOGENOM" id="CLU_017718_7_1_1"/>
<dbReference type="InParanoid" id="Q08DM7"/>
<dbReference type="OMA" id="QCEFVYL"/>
<dbReference type="OrthoDB" id="416553at2759"/>
<dbReference type="TreeFam" id="TF101078"/>
<dbReference type="Proteomes" id="UP000009136">
    <property type="component" value="Chromosome 5"/>
</dbReference>
<dbReference type="Bgee" id="ENSBTAG00000013173">
    <property type="expression patterns" value="Expressed in Ammon's horn and 78 other cell types or tissues"/>
</dbReference>
<dbReference type="GO" id="GO:0032153">
    <property type="term" value="C:cell division site"/>
    <property type="evidence" value="ECO:0000318"/>
    <property type="project" value="GO_Central"/>
</dbReference>
<dbReference type="GO" id="GO:0015630">
    <property type="term" value="C:microtubule cytoskeleton"/>
    <property type="evidence" value="ECO:0000318"/>
    <property type="project" value="GO_Central"/>
</dbReference>
<dbReference type="GO" id="GO:0098793">
    <property type="term" value="C:presynapse"/>
    <property type="evidence" value="ECO:0000250"/>
    <property type="project" value="UniProtKB"/>
</dbReference>
<dbReference type="GO" id="GO:0031105">
    <property type="term" value="C:septin complex"/>
    <property type="evidence" value="ECO:0000250"/>
    <property type="project" value="UniProtKB"/>
</dbReference>
<dbReference type="GO" id="GO:0005940">
    <property type="term" value="C:septin ring"/>
    <property type="evidence" value="ECO:0000318"/>
    <property type="project" value="GO_Central"/>
</dbReference>
<dbReference type="GO" id="GO:0005525">
    <property type="term" value="F:GTP binding"/>
    <property type="evidence" value="ECO:0007669"/>
    <property type="project" value="UniProtKB-KW"/>
</dbReference>
<dbReference type="GO" id="GO:0003924">
    <property type="term" value="F:GTPase activity"/>
    <property type="evidence" value="ECO:0000318"/>
    <property type="project" value="GO_Central"/>
</dbReference>
<dbReference type="GO" id="GO:0060090">
    <property type="term" value="F:molecular adaptor activity"/>
    <property type="evidence" value="ECO:0000318"/>
    <property type="project" value="GO_Central"/>
</dbReference>
<dbReference type="GO" id="GO:0061640">
    <property type="term" value="P:cytoskeleton-dependent cytokinesis"/>
    <property type="evidence" value="ECO:0000318"/>
    <property type="project" value="GO_Central"/>
</dbReference>
<dbReference type="GO" id="GO:0008104">
    <property type="term" value="P:protein localization"/>
    <property type="evidence" value="ECO:0000318"/>
    <property type="project" value="GO_Central"/>
</dbReference>
<dbReference type="CDD" id="cd01850">
    <property type="entry name" value="CDC_Septin"/>
    <property type="match status" value="1"/>
</dbReference>
<dbReference type="FunFam" id="3.40.50.300:FF:000387">
    <property type="entry name" value="neuronal-specific septin-3 isoform X1"/>
    <property type="match status" value="1"/>
</dbReference>
<dbReference type="Gene3D" id="3.40.50.300">
    <property type="entry name" value="P-loop containing nucleotide triphosphate hydrolases"/>
    <property type="match status" value="1"/>
</dbReference>
<dbReference type="InterPro" id="IPR030379">
    <property type="entry name" value="G_SEPTIN_dom"/>
</dbReference>
<dbReference type="InterPro" id="IPR027417">
    <property type="entry name" value="P-loop_NTPase"/>
</dbReference>
<dbReference type="InterPro" id="IPR016491">
    <property type="entry name" value="Septin"/>
</dbReference>
<dbReference type="InterPro" id="IPR008114">
    <property type="entry name" value="Septin3"/>
</dbReference>
<dbReference type="PANTHER" id="PTHR18884">
    <property type="entry name" value="SEPTIN"/>
    <property type="match status" value="1"/>
</dbReference>
<dbReference type="Pfam" id="PF00735">
    <property type="entry name" value="Septin"/>
    <property type="match status" value="1"/>
</dbReference>
<dbReference type="PIRSF" id="PIRSF006698">
    <property type="entry name" value="Septin"/>
    <property type="match status" value="1"/>
</dbReference>
<dbReference type="PRINTS" id="PR01741">
    <property type="entry name" value="SEPTIN3"/>
</dbReference>
<dbReference type="SUPFAM" id="SSF52540">
    <property type="entry name" value="P-loop containing nucleoside triphosphate hydrolases"/>
    <property type="match status" value="1"/>
</dbReference>
<dbReference type="PROSITE" id="PS51719">
    <property type="entry name" value="G_SEPTIN"/>
    <property type="match status" value="1"/>
</dbReference>
<proteinExistence type="evidence at transcript level"/>
<accession>Q08DM7</accession>
<keyword id="KW-0131">Cell cycle</keyword>
<keyword id="KW-0132">Cell division</keyword>
<keyword id="KW-0963">Cytoplasm</keyword>
<keyword id="KW-0206">Cytoskeleton</keyword>
<keyword id="KW-0342">GTP-binding</keyword>
<keyword id="KW-0547">Nucleotide-binding</keyword>
<keyword id="KW-0597">Phosphoprotein</keyword>
<keyword id="KW-1185">Reference proteome</keyword>
<keyword id="KW-0770">Synapse</keyword>
<protein>
    <recommendedName>
        <fullName>Neuronal-specific septin-3</fullName>
    </recommendedName>
</protein>
<feature type="chain" id="PRO_0000270221" description="Neuronal-specific septin-3">
    <location>
        <begin position="1"/>
        <end position="357"/>
    </location>
</feature>
<feature type="domain" description="Septin-type G" evidence="4">
    <location>
        <begin position="58"/>
        <end position="330"/>
    </location>
</feature>
<feature type="region of interest" description="Disordered" evidence="5">
    <location>
        <begin position="1"/>
        <end position="29"/>
    </location>
</feature>
<feature type="region of interest" description="G1 motif" evidence="4">
    <location>
        <begin position="68"/>
        <end position="75"/>
    </location>
</feature>
<feature type="region of interest" description="G3 motif" evidence="4">
    <location>
        <begin position="125"/>
        <end position="128"/>
    </location>
</feature>
<feature type="region of interest" description="G4 motif" evidence="4">
    <location>
        <begin position="207"/>
        <end position="210"/>
    </location>
</feature>
<feature type="compositionally biased region" description="Basic and acidic residues" evidence="5">
    <location>
        <begin position="1"/>
        <end position="10"/>
    </location>
</feature>
<feature type="binding site" evidence="2">
    <location>
        <begin position="68"/>
        <end position="75"/>
    </location>
    <ligand>
        <name>GTP</name>
        <dbReference type="ChEBI" id="CHEBI:37565"/>
    </ligand>
</feature>
<feature type="binding site" evidence="2">
    <location>
        <position position="102"/>
    </location>
    <ligand>
        <name>GTP</name>
        <dbReference type="ChEBI" id="CHEBI:37565"/>
    </ligand>
</feature>
<feature type="binding site" evidence="2">
    <location>
        <begin position="208"/>
        <end position="216"/>
    </location>
    <ligand>
        <name>GTP</name>
        <dbReference type="ChEBI" id="CHEBI:37565"/>
    </ligand>
</feature>
<feature type="binding site" evidence="2">
    <location>
        <position position="264"/>
    </location>
    <ligand>
        <name>GTP</name>
        <dbReference type="ChEBI" id="CHEBI:37565"/>
    </ligand>
</feature>
<feature type="binding site" evidence="2">
    <location>
        <position position="279"/>
    </location>
    <ligand>
        <name>GTP</name>
        <dbReference type="ChEBI" id="CHEBI:37565"/>
    </ligand>
</feature>
<feature type="modified residue" description="Phosphoserine" evidence="3">
    <location>
        <position position="91"/>
    </location>
</feature>
<organism>
    <name type="scientific">Bos taurus</name>
    <name type="common">Bovine</name>
    <dbReference type="NCBI Taxonomy" id="9913"/>
    <lineage>
        <taxon>Eukaryota</taxon>
        <taxon>Metazoa</taxon>
        <taxon>Chordata</taxon>
        <taxon>Craniata</taxon>
        <taxon>Vertebrata</taxon>
        <taxon>Euteleostomi</taxon>
        <taxon>Mammalia</taxon>
        <taxon>Eutheria</taxon>
        <taxon>Laurasiatheria</taxon>
        <taxon>Artiodactyla</taxon>
        <taxon>Ruminantia</taxon>
        <taxon>Pecora</taxon>
        <taxon>Bovidae</taxon>
        <taxon>Bovinae</taxon>
        <taxon>Bos</taxon>
    </lineage>
</organism>
<sequence>MSKGLPETRTDAAMSELVPEPRPKPAVPMKPIGINPNLLGYIGIDTIIEQMRKKTMKTGFDFNIMVVGQSGLGKSTLVNTLFKSQVSRKASSWNREEKIPKTVEIKAIGHVIEEGGVKMKLTVIDTPGFGDQINNENCWEPIEKYINEQYEKFLKEEVNIARKKRIPDTRVHCCLYFISPTGHSLRPLDLEFMKHLSKVVNIIPVIAKADTMTLEEKSEFKQRVRKELEVNGIEFYPQKEFDEDLEDKTENDKIRESMPFAVVGSDKEYQVNGKRVLGRKTPWGIIEVENLNHCEFALLRDFVIRTHLQDLKEVTHNIHYETYRAKRLNDNGGLPPGEGLLGTVLPPVPATPCPTAE</sequence>
<evidence type="ECO:0000250" key="1"/>
<evidence type="ECO:0000250" key="2">
    <source>
        <dbReference type="UniProtKB" id="Q9UH03"/>
    </source>
</evidence>
<evidence type="ECO:0000250" key="3">
    <source>
        <dbReference type="UniProtKB" id="Q9WU34"/>
    </source>
</evidence>
<evidence type="ECO:0000255" key="4">
    <source>
        <dbReference type="PROSITE-ProRule" id="PRU01056"/>
    </source>
</evidence>
<evidence type="ECO:0000256" key="5">
    <source>
        <dbReference type="SAM" id="MobiDB-lite"/>
    </source>
</evidence>
<evidence type="ECO:0000305" key="6"/>